<organism>
    <name type="scientific">Escherichia coli (strain SE11)</name>
    <dbReference type="NCBI Taxonomy" id="409438"/>
    <lineage>
        <taxon>Bacteria</taxon>
        <taxon>Pseudomonadati</taxon>
        <taxon>Pseudomonadota</taxon>
        <taxon>Gammaproteobacteria</taxon>
        <taxon>Enterobacterales</taxon>
        <taxon>Enterobacteriaceae</taxon>
        <taxon>Escherichia</taxon>
    </lineage>
</organism>
<protein>
    <recommendedName>
        <fullName evidence="1">Carboxy-S-adenosyl-L-methionine synthase</fullName>
        <shortName evidence="1">Cx-SAM synthase</shortName>
        <ecNumber evidence="1">2.1.3.-</ecNumber>
    </recommendedName>
</protein>
<comment type="function">
    <text evidence="1">Catalyzes the conversion of S-adenosyl-L-methionine (SAM) to carboxy-S-adenosyl-L-methionine (Cx-SAM).</text>
</comment>
<comment type="catalytic activity">
    <reaction evidence="1">
        <text>prephenate + S-adenosyl-L-methionine = carboxy-S-adenosyl-L-methionine + 3-phenylpyruvate + H2O</text>
        <dbReference type="Rhea" id="RHEA:51692"/>
        <dbReference type="ChEBI" id="CHEBI:15377"/>
        <dbReference type="ChEBI" id="CHEBI:18005"/>
        <dbReference type="ChEBI" id="CHEBI:29934"/>
        <dbReference type="ChEBI" id="CHEBI:59789"/>
        <dbReference type="ChEBI" id="CHEBI:134278"/>
    </reaction>
</comment>
<comment type="subunit">
    <text evidence="1">Homodimer.</text>
</comment>
<comment type="similarity">
    <text evidence="1">Belongs to the class I-like SAM-binding methyltransferase superfamily. Cx-SAM synthase family.</text>
</comment>
<proteinExistence type="inferred from homology"/>
<feature type="chain" id="PRO_1000201347" description="Carboxy-S-adenosyl-L-methionine synthase">
    <location>
        <begin position="1"/>
        <end position="247"/>
    </location>
</feature>
<feature type="binding site" evidence="1">
    <location>
        <position position="39"/>
    </location>
    <ligand>
        <name>S-adenosyl-L-methionine</name>
        <dbReference type="ChEBI" id="CHEBI:59789"/>
    </ligand>
</feature>
<feature type="binding site" evidence="1">
    <location>
        <begin position="64"/>
        <end position="66"/>
    </location>
    <ligand>
        <name>S-adenosyl-L-methionine</name>
        <dbReference type="ChEBI" id="CHEBI:59789"/>
    </ligand>
</feature>
<feature type="binding site" evidence="1">
    <location>
        <begin position="89"/>
        <end position="90"/>
    </location>
    <ligand>
        <name>S-adenosyl-L-methionine</name>
        <dbReference type="ChEBI" id="CHEBI:59789"/>
    </ligand>
</feature>
<feature type="binding site" evidence="1">
    <location>
        <begin position="117"/>
        <end position="118"/>
    </location>
    <ligand>
        <name>S-adenosyl-L-methionine</name>
        <dbReference type="ChEBI" id="CHEBI:59789"/>
    </ligand>
</feature>
<feature type="binding site" evidence="1">
    <location>
        <position position="132"/>
    </location>
    <ligand>
        <name>S-adenosyl-L-methionine</name>
        <dbReference type="ChEBI" id="CHEBI:59789"/>
    </ligand>
</feature>
<feature type="binding site" evidence="1">
    <location>
        <position position="199"/>
    </location>
    <ligand>
        <name>S-adenosyl-L-methionine</name>
        <dbReference type="ChEBI" id="CHEBI:59789"/>
    </ligand>
</feature>
<dbReference type="EC" id="2.1.3.-" evidence="1"/>
<dbReference type="EMBL" id="AP009240">
    <property type="protein sequence ID" value="BAG77629.1"/>
    <property type="molecule type" value="Genomic_DNA"/>
</dbReference>
<dbReference type="RefSeq" id="WP_000019588.1">
    <property type="nucleotide sequence ID" value="NC_011415.1"/>
</dbReference>
<dbReference type="SMR" id="B6I1E8"/>
<dbReference type="GeneID" id="75202724"/>
<dbReference type="KEGG" id="ecy:ECSE_2105"/>
<dbReference type="HOGENOM" id="CLU_078475_0_0_6"/>
<dbReference type="Proteomes" id="UP000008199">
    <property type="component" value="Chromosome"/>
</dbReference>
<dbReference type="GO" id="GO:0016743">
    <property type="term" value="F:carboxyl- or carbamoyltransferase activity"/>
    <property type="evidence" value="ECO:0007669"/>
    <property type="project" value="UniProtKB-UniRule"/>
</dbReference>
<dbReference type="GO" id="GO:1904047">
    <property type="term" value="F:S-adenosyl-L-methionine binding"/>
    <property type="evidence" value="ECO:0007669"/>
    <property type="project" value="UniProtKB-UniRule"/>
</dbReference>
<dbReference type="GO" id="GO:0002098">
    <property type="term" value="P:tRNA wobble uridine modification"/>
    <property type="evidence" value="ECO:0007669"/>
    <property type="project" value="InterPro"/>
</dbReference>
<dbReference type="CDD" id="cd02440">
    <property type="entry name" value="AdoMet_MTases"/>
    <property type="match status" value="1"/>
</dbReference>
<dbReference type="FunFam" id="3.40.50.150:FF:000030">
    <property type="entry name" value="Carboxy-S-adenosyl-L-methionine synthase"/>
    <property type="match status" value="1"/>
</dbReference>
<dbReference type="Gene3D" id="3.40.50.150">
    <property type="entry name" value="Vaccinia Virus protein VP39"/>
    <property type="match status" value="1"/>
</dbReference>
<dbReference type="HAMAP" id="MF_01589">
    <property type="entry name" value="Cx_SAM_synthase"/>
    <property type="match status" value="1"/>
</dbReference>
<dbReference type="InterPro" id="IPR005271">
    <property type="entry name" value="CmoA"/>
</dbReference>
<dbReference type="InterPro" id="IPR041698">
    <property type="entry name" value="Methyltransf_25"/>
</dbReference>
<dbReference type="InterPro" id="IPR029063">
    <property type="entry name" value="SAM-dependent_MTases_sf"/>
</dbReference>
<dbReference type="NCBIfam" id="TIGR00740">
    <property type="entry name" value="carboxy-S-adenosyl-L-methionine synthase CmoA"/>
    <property type="match status" value="1"/>
</dbReference>
<dbReference type="NCBIfam" id="NF011995">
    <property type="entry name" value="PRK15451.1"/>
    <property type="match status" value="1"/>
</dbReference>
<dbReference type="PANTHER" id="PTHR43861:SF2">
    <property type="entry name" value="CARBOXY-S-ADENOSYL-L-METHIONINE SYNTHASE"/>
    <property type="match status" value="1"/>
</dbReference>
<dbReference type="PANTHER" id="PTHR43861">
    <property type="entry name" value="TRANS-ACONITATE 2-METHYLTRANSFERASE-RELATED"/>
    <property type="match status" value="1"/>
</dbReference>
<dbReference type="Pfam" id="PF13649">
    <property type="entry name" value="Methyltransf_25"/>
    <property type="match status" value="1"/>
</dbReference>
<dbReference type="PIRSF" id="PIRSF006325">
    <property type="entry name" value="MeTrfase_bac"/>
    <property type="match status" value="1"/>
</dbReference>
<dbReference type="SUPFAM" id="SSF53335">
    <property type="entry name" value="S-adenosyl-L-methionine-dependent methyltransferases"/>
    <property type="match status" value="1"/>
</dbReference>
<gene>
    <name evidence="1" type="primary">cmoA</name>
    <name type="ordered locus">ECSE_2105</name>
</gene>
<evidence type="ECO:0000255" key="1">
    <source>
        <dbReference type="HAMAP-Rule" id="MF_01589"/>
    </source>
</evidence>
<name>CMOA_ECOSE</name>
<sequence>MSHRDTLFSAPIARLGDWTFDERVAEVFPDMIQRSVPGYSNIISMIGMLAERFVQPGTQVYDLGCSLGAATLSVRRNIHHDNCKIIAIDNSPAMIERCRRHIDAYKAPTPVDVIEGDIRDIAIENASMVVLNFTLQFLEPSERQALLDKIYQGLNPGGALVLSEKFSFEDAKVGELLFNMHHDFKRANGYSELEISQKRSMLENVMLTDSVETHKARLHKAGFEHSELWFQCFNFGSLVALKAEDAA</sequence>
<keyword id="KW-0949">S-adenosyl-L-methionine</keyword>
<keyword id="KW-0808">Transferase</keyword>
<reference key="1">
    <citation type="journal article" date="2008" name="DNA Res.">
        <title>Complete genome sequence and comparative analysis of the wild-type commensal Escherichia coli strain SE11 isolated from a healthy adult.</title>
        <authorList>
            <person name="Oshima K."/>
            <person name="Toh H."/>
            <person name="Ogura Y."/>
            <person name="Sasamoto H."/>
            <person name="Morita H."/>
            <person name="Park S.-H."/>
            <person name="Ooka T."/>
            <person name="Iyoda S."/>
            <person name="Taylor T.D."/>
            <person name="Hayashi T."/>
            <person name="Itoh K."/>
            <person name="Hattori M."/>
        </authorList>
    </citation>
    <scope>NUCLEOTIDE SEQUENCE [LARGE SCALE GENOMIC DNA]</scope>
    <source>
        <strain>SE11</strain>
    </source>
</reference>
<accession>B6I1E8</accession>